<dbReference type="EMBL" id="AE000520">
    <property type="protein sequence ID" value="AAC65716.1"/>
    <property type="molecule type" value="Genomic_DNA"/>
</dbReference>
<dbReference type="PIR" id="C71287">
    <property type="entry name" value="C71287"/>
</dbReference>
<dbReference type="RefSeq" id="WP_010882195.1">
    <property type="nucleotide sequence ID" value="NC_021490.2"/>
</dbReference>
<dbReference type="SMR" id="O83731"/>
<dbReference type="STRING" id="243276.TP_0750"/>
<dbReference type="EnsemblBacteria" id="AAC65716">
    <property type="protein sequence ID" value="AAC65716"/>
    <property type="gene ID" value="TP_0750"/>
</dbReference>
<dbReference type="KEGG" id="tpa:TP_0750"/>
<dbReference type="KEGG" id="tpw:TPANIC_0750"/>
<dbReference type="eggNOG" id="COG2304">
    <property type="taxonomic scope" value="Bacteria"/>
</dbReference>
<dbReference type="HOGENOM" id="CLU_1255493_0_0_12"/>
<dbReference type="OrthoDB" id="359032at2"/>
<dbReference type="Proteomes" id="UP000000811">
    <property type="component" value="Chromosome"/>
</dbReference>
<dbReference type="CDD" id="cd00198">
    <property type="entry name" value="vWFA"/>
    <property type="match status" value="1"/>
</dbReference>
<dbReference type="Gene3D" id="3.40.50.410">
    <property type="entry name" value="von Willebrand factor, type A domain"/>
    <property type="match status" value="1"/>
</dbReference>
<dbReference type="InterPro" id="IPR002035">
    <property type="entry name" value="VWF_A"/>
</dbReference>
<dbReference type="InterPro" id="IPR036465">
    <property type="entry name" value="vWFA_dom_sf"/>
</dbReference>
<dbReference type="Pfam" id="PF13519">
    <property type="entry name" value="VWA_2"/>
    <property type="match status" value="1"/>
</dbReference>
<dbReference type="SMART" id="SM00327">
    <property type="entry name" value="VWA"/>
    <property type="match status" value="1"/>
</dbReference>
<dbReference type="SUPFAM" id="SSF53300">
    <property type="entry name" value="vWA-like"/>
    <property type="match status" value="1"/>
</dbReference>
<dbReference type="PROSITE" id="PS50234">
    <property type="entry name" value="VWFA"/>
    <property type="match status" value="1"/>
</dbReference>
<keyword id="KW-1185">Reference proteome</keyword>
<keyword id="KW-0732">Signal</keyword>
<feature type="signal peptide" evidence="1">
    <location>
        <begin position="1"/>
        <end position="22"/>
    </location>
</feature>
<feature type="chain" id="PRO_0000014256" description="Uncharacterized protein TP_0750">
    <location>
        <begin position="23"/>
        <end position="223"/>
    </location>
</feature>
<feature type="domain" description="VWFA" evidence="2">
    <location>
        <begin position="30"/>
        <end position="204"/>
    </location>
</feature>
<feature type="region of interest" description="Disordered" evidence="3">
    <location>
        <begin position="199"/>
        <end position="223"/>
    </location>
</feature>
<organism>
    <name type="scientific">Treponema pallidum (strain Nichols)</name>
    <dbReference type="NCBI Taxonomy" id="243276"/>
    <lineage>
        <taxon>Bacteria</taxon>
        <taxon>Pseudomonadati</taxon>
        <taxon>Spirochaetota</taxon>
        <taxon>Spirochaetia</taxon>
        <taxon>Spirochaetales</taxon>
        <taxon>Treponemataceae</taxon>
        <taxon>Treponema</taxon>
    </lineage>
</organism>
<sequence>MHLKKALCPALCTFLIHLCLHAGERTVPVDIFLMIDKSRSMQEPGKFSSLHRWVRDEFVSSMTIQGDWITVYQFYEKPEELITLTLRSEQDRDKIISVVDSIVPNGRYTDIGRALDTVWEIQEKRKDNNRHKVLLLVTDLEHDAPLTSKYRGKQRSFQSPYLVRARRVKHDNWYEITLDMAVHDRVAHTARELYRSIAAAHSKRPTPTPPAKESSPRYTPSLD</sequence>
<evidence type="ECO:0000255" key="1"/>
<evidence type="ECO:0000255" key="2">
    <source>
        <dbReference type="PROSITE-ProRule" id="PRU00219"/>
    </source>
</evidence>
<evidence type="ECO:0000256" key="3">
    <source>
        <dbReference type="SAM" id="MobiDB-lite"/>
    </source>
</evidence>
<proteinExistence type="inferred from homology"/>
<name>Y750_TREPA</name>
<protein>
    <recommendedName>
        <fullName>Uncharacterized protein TP_0750</fullName>
    </recommendedName>
</protein>
<gene>
    <name type="ordered locus">TP_0750</name>
</gene>
<accession>O83731</accession>
<reference key="1">
    <citation type="journal article" date="1998" name="Science">
        <title>Complete genome sequence of Treponema pallidum, the syphilis spirochete.</title>
        <authorList>
            <person name="Fraser C.M."/>
            <person name="Norris S.J."/>
            <person name="Weinstock G.M."/>
            <person name="White O."/>
            <person name="Sutton G.G."/>
            <person name="Dodson R.J."/>
            <person name="Gwinn M.L."/>
            <person name="Hickey E.K."/>
            <person name="Clayton R.A."/>
            <person name="Ketchum K.A."/>
            <person name="Sodergren E."/>
            <person name="Hardham J.M."/>
            <person name="McLeod M.P."/>
            <person name="Salzberg S.L."/>
            <person name="Peterson J.D."/>
            <person name="Khalak H.G."/>
            <person name="Richardson D.L."/>
            <person name="Howell J.K."/>
            <person name="Chidambaram M."/>
            <person name="Utterback T.R."/>
            <person name="McDonald L.A."/>
            <person name="Artiach P."/>
            <person name="Bowman C."/>
            <person name="Cotton M.D."/>
            <person name="Fujii C."/>
            <person name="Garland S.A."/>
            <person name="Hatch B."/>
            <person name="Horst K."/>
            <person name="Roberts K.M."/>
            <person name="Sandusky M."/>
            <person name="Weidman J.F."/>
            <person name="Smith H.O."/>
            <person name="Venter J.C."/>
        </authorList>
    </citation>
    <scope>NUCLEOTIDE SEQUENCE [LARGE SCALE GENOMIC DNA]</scope>
    <source>
        <strain>Nichols</strain>
    </source>
</reference>